<proteinExistence type="inferred from homology"/>
<gene>
    <name evidence="1" type="primary">secE</name>
    <name type="ordered locus">PA4276</name>
</gene>
<name>SECE_PSEAE</name>
<keyword id="KW-0997">Cell inner membrane</keyword>
<keyword id="KW-1003">Cell membrane</keyword>
<keyword id="KW-0472">Membrane</keyword>
<keyword id="KW-0653">Protein transport</keyword>
<keyword id="KW-1185">Reference proteome</keyword>
<keyword id="KW-0811">Translocation</keyword>
<keyword id="KW-0812">Transmembrane</keyword>
<keyword id="KW-1133">Transmembrane helix</keyword>
<keyword id="KW-0813">Transport</keyword>
<protein>
    <recommendedName>
        <fullName evidence="1">Protein translocase subunit SecE</fullName>
    </recommendedName>
</protein>
<sequence length="122" mass="13381">MNAKAEAKESRFDLLKWLLVAVLVVVAVVGNQYFSAQPILYRVLGILVLAVIAAFLALQTAKGQAFFSLAKEARVEIRKVVWPSRQETTQTTLIVVAVVLVMALLLWGLDSLLGWLVSMIVG</sequence>
<evidence type="ECO:0000255" key="1">
    <source>
        <dbReference type="HAMAP-Rule" id="MF_00422"/>
    </source>
</evidence>
<comment type="function">
    <text evidence="1">Essential subunit of the Sec protein translocation channel SecYEG. Clamps together the 2 halves of SecY. May contact the channel plug during translocation.</text>
</comment>
<comment type="subunit">
    <text evidence="1">Component of the Sec protein translocase complex. Heterotrimer consisting of SecY, SecE and SecG subunits. The heterotrimers can form oligomers, although 1 heterotrimer is thought to be able to translocate proteins. Interacts with the ribosome. Interacts with SecDF, and other proteins may be involved. Interacts with SecA.</text>
</comment>
<comment type="subcellular location">
    <subcellularLocation>
        <location evidence="1">Cell inner membrane</location>
        <topology evidence="1">Multi-pass membrane protein</topology>
    </subcellularLocation>
</comment>
<comment type="similarity">
    <text evidence="1">Belongs to the SecE/SEC61-gamma family.</text>
</comment>
<reference key="1">
    <citation type="journal article" date="2000" name="Nature">
        <title>Complete genome sequence of Pseudomonas aeruginosa PAO1, an opportunistic pathogen.</title>
        <authorList>
            <person name="Stover C.K."/>
            <person name="Pham X.-Q.T."/>
            <person name="Erwin A.L."/>
            <person name="Mizoguchi S.D."/>
            <person name="Warrener P."/>
            <person name="Hickey M.J."/>
            <person name="Brinkman F.S.L."/>
            <person name="Hufnagle W.O."/>
            <person name="Kowalik D.J."/>
            <person name="Lagrou M."/>
            <person name="Garber R.L."/>
            <person name="Goltry L."/>
            <person name="Tolentino E."/>
            <person name="Westbrock-Wadman S."/>
            <person name="Yuan Y."/>
            <person name="Brody L.L."/>
            <person name="Coulter S.N."/>
            <person name="Folger K.R."/>
            <person name="Kas A."/>
            <person name="Larbig K."/>
            <person name="Lim R.M."/>
            <person name="Smith K.A."/>
            <person name="Spencer D.H."/>
            <person name="Wong G.K.-S."/>
            <person name="Wu Z."/>
            <person name="Paulsen I.T."/>
            <person name="Reizer J."/>
            <person name="Saier M.H. Jr."/>
            <person name="Hancock R.E.W."/>
            <person name="Lory S."/>
            <person name="Olson M.V."/>
        </authorList>
    </citation>
    <scope>NUCLEOTIDE SEQUENCE [LARGE SCALE GENOMIC DNA]</scope>
    <source>
        <strain>ATCC 15692 / DSM 22644 / CIP 104116 / JCM 14847 / LMG 12228 / 1C / PRS 101 / PAO1</strain>
    </source>
</reference>
<dbReference type="EMBL" id="AE004091">
    <property type="protein sequence ID" value="AAG07664.1"/>
    <property type="molecule type" value="Genomic_DNA"/>
</dbReference>
<dbReference type="PIR" id="E83111">
    <property type="entry name" value="E83111"/>
</dbReference>
<dbReference type="RefSeq" id="NP_252966.1">
    <property type="nucleotide sequence ID" value="NC_002516.2"/>
</dbReference>
<dbReference type="RefSeq" id="WP_003108030.1">
    <property type="nucleotide sequence ID" value="NZ_QZGE01000028.1"/>
</dbReference>
<dbReference type="SMR" id="Q9HWC3"/>
<dbReference type="FunCoup" id="Q9HWC3">
    <property type="interactions" value="117"/>
</dbReference>
<dbReference type="STRING" id="208964.PA4276"/>
<dbReference type="PaxDb" id="208964-PA4276"/>
<dbReference type="GeneID" id="77219185"/>
<dbReference type="GeneID" id="881694"/>
<dbReference type="KEGG" id="pae:PA4276"/>
<dbReference type="PATRIC" id="fig|208964.12.peg.4477"/>
<dbReference type="PseudoCAP" id="PA4276"/>
<dbReference type="HOGENOM" id="CLU_113663_0_1_6"/>
<dbReference type="InParanoid" id="Q9HWC3"/>
<dbReference type="OrthoDB" id="9806365at2"/>
<dbReference type="PhylomeDB" id="Q9HWC3"/>
<dbReference type="BioCyc" id="PAER208964:G1FZ6-4351-MONOMER"/>
<dbReference type="Proteomes" id="UP000002438">
    <property type="component" value="Chromosome"/>
</dbReference>
<dbReference type="GO" id="GO:0005886">
    <property type="term" value="C:plasma membrane"/>
    <property type="evidence" value="ECO:0000318"/>
    <property type="project" value="GO_Central"/>
</dbReference>
<dbReference type="GO" id="GO:0008320">
    <property type="term" value="F:protein transmembrane transporter activity"/>
    <property type="evidence" value="ECO:0000318"/>
    <property type="project" value="GO_Central"/>
</dbReference>
<dbReference type="GO" id="GO:0065002">
    <property type="term" value="P:intracellular protein transmembrane transport"/>
    <property type="evidence" value="ECO:0007669"/>
    <property type="project" value="UniProtKB-UniRule"/>
</dbReference>
<dbReference type="GO" id="GO:0009306">
    <property type="term" value="P:protein secretion"/>
    <property type="evidence" value="ECO:0007669"/>
    <property type="project" value="UniProtKB-UniRule"/>
</dbReference>
<dbReference type="GO" id="GO:0006605">
    <property type="term" value="P:protein targeting"/>
    <property type="evidence" value="ECO:0007669"/>
    <property type="project" value="UniProtKB-UniRule"/>
</dbReference>
<dbReference type="GO" id="GO:0043952">
    <property type="term" value="P:protein transport by the Sec complex"/>
    <property type="evidence" value="ECO:0000318"/>
    <property type="project" value="GO_Central"/>
</dbReference>
<dbReference type="Gene3D" id="1.20.5.1030">
    <property type="entry name" value="Preprotein translocase secy subunit"/>
    <property type="match status" value="1"/>
</dbReference>
<dbReference type="HAMAP" id="MF_00422">
    <property type="entry name" value="SecE"/>
    <property type="match status" value="1"/>
</dbReference>
<dbReference type="InterPro" id="IPR005807">
    <property type="entry name" value="SecE_bac"/>
</dbReference>
<dbReference type="InterPro" id="IPR038379">
    <property type="entry name" value="SecE_sf"/>
</dbReference>
<dbReference type="InterPro" id="IPR001901">
    <property type="entry name" value="Translocase_SecE/Sec61-g"/>
</dbReference>
<dbReference type="NCBIfam" id="NF004372">
    <property type="entry name" value="PRK05740.1-2"/>
    <property type="match status" value="1"/>
</dbReference>
<dbReference type="NCBIfam" id="NF004378">
    <property type="entry name" value="PRK05740.2-4"/>
    <property type="match status" value="1"/>
</dbReference>
<dbReference type="NCBIfam" id="NF004379">
    <property type="entry name" value="PRK05740.2-5"/>
    <property type="match status" value="1"/>
</dbReference>
<dbReference type="NCBIfam" id="TIGR00964">
    <property type="entry name" value="secE_bact"/>
    <property type="match status" value="1"/>
</dbReference>
<dbReference type="PANTHER" id="PTHR33910">
    <property type="entry name" value="PROTEIN TRANSLOCASE SUBUNIT SECE"/>
    <property type="match status" value="1"/>
</dbReference>
<dbReference type="PANTHER" id="PTHR33910:SF1">
    <property type="entry name" value="PROTEIN TRANSLOCASE SUBUNIT SECE"/>
    <property type="match status" value="1"/>
</dbReference>
<dbReference type="Pfam" id="PF00584">
    <property type="entry name" value="SecE"/>
    <property type="match status" value="1"/>
</dbReference>
<dbReference type="PRINTS" id="PR01650">
    <property type="entry name" value="SECETRNLCASE"/>
</dbReference>
<dbReference type="PROSITE" id="PS01067">
    <property type="entry name" value="SECE_SEC61G"/>
    <property type="match status" value="1"/>
</dbReference>
<feature type="chain" id="PRO_0000287811" description="Protein translocase subunit SecE">
    <location>
        <begin position="1"/>
        <end position="122"/>
    </location>
</feature>
<feature type="transmembrane region" description="Helical" evidence="1">
    <location>
        <begin position="14"/>
        <end position="34"/>
    </location>
</feature>
<feature type="transmembrane region" description="Helical" evidence="1">
    <location>
        <begin position="38"/>
        <end position="58"/>
    </location>
</feature>
<feature type="transmembrane region" description="Helical" evidence="1">
    <location>
        <begin position="93"/>
        <end position="113"/>
    </location>
</feature>
<accession>Q9HWC3</accession>
<organism>
    <name type="scientific">Pseudomonas aeruginosa (strain ATCC 15692 / DSM 22644 / CIP 104116 / JCM 14847 / LMG 12228 / 1C / PRS 101 / PAO1)</name>
    <dbReference type="NCBI Taxonomy" id="208964"/>
    <lineage>
        <taxon>Bacteria</taxon>
        <taxon>Pseudomonadati</taxon>
        <taxon>Pseudomonadota</taxon>
        <taxon>Gammaproteobacteria</taxon>
        <taxon>Pseudomonadales</taxon>
        <taxon>Pseudomonadaceae</taxon>
        <taxon>Pseudomonas</taxon>
    </lineage>
</organism>